<evidence type="ECO:0000255" key="1">
    <source>
        <dbReference type="HAMAP-Rule" id="MF_01077"/>
    </source>
</evidence>
<evidence type="ECO:0000305" key="2"/>
<name>RIMP_SYNS9</name>
<sequence>MPHPLLPELEQLTQRVAGLQGFELCGIQLLTHMNPITLQVQIRHTSGSDVNLDDCAGFSGVLGEALEESQQLVEAYVLEISSPGIGEQLSCDRDFQTFRGFPVDVTHRDQGNVEHRLEGLLHERNTDSLQINIRGRIKSIPRDQVIEVRLTTPGQ</sequence>
<organism>
    <name type="scientific">Synechococcus sp. (strain CC9902)</name>
    <dbReference type="NCBI Taxonomy" id="316279"/>
    <lineage>
        <taxon>Bacteria</taxon>
        <taxon>Bacillati</taxon>
        <taxon>Cyanobacteriota</taxon>
        <taxon>Cyanophyceae</taxon>
        <taxon>Synechococcales</taxon>
        <taxon>Synechococcaceae</taxon>
        <taxon>Synechococcus</taxon>
    </lineage>
</organism>
<feature type="chain" id="PRO_1000064791" description="Ribosome maturation factor RimP">
    <location>
        <begin position="1"/>
        <end position="155"/>
    </location>
</feature>
<keyword id="KW-0963">Cytoplasm</keyword>
<keyword id="KW-1185">Reference proteome</keyword>
<keyword id="KW-0690">Ribosome biogenesis</keyword>
<dbReference type="EMBL" id="CP000097">
    <property type="protein sequence ID" value="ABB25563.1"/>
    <property type="status" value="ALT_INIT"/>
    <property type="molecule type" value="Genomic_DNA"/>
</dbReference>
<dbReference type="RefSeq" id="WP_198001747.1">
    <property type="nucleotide sequence ID" value="NC_007513.1"/>
</dbReference>
<dbReference type="SMR" id="Q3AZB4"/>
<dbReference type="STRING" id="316279.Syncc9902_0595"/>
<dbReference type="KEGG" id="sye:Syncc9902_0595"/>
<dbReference type="eggNOG" id="COG0779">
    <property type="taxonomic scope" value="Bacteria"/>
</dbReference>
<dbReference type="HOGENOM" id="CLU_070525_2_1_3"/>
<dbReference type="Proteomes" id="UP000002712">
    <property type="component" value="Chromosome"/>
</dbReference>
<dbReference type="GO" id="GO:0005829">
    <property type="term" value="C:cytosol"/>
    <property type="evidence" value="ECO:0007669"/>
    <property type="project" value="TreeGrafter"/>
</dbReference>
<dbReference type="GO" id="GO:0000028">
    <property type="term" value="P:ribosomal small subunit assembly"/>
    <property type="evidence" value="ECO:0007669"/>
    <property type="project" value="TreeGrafter"/>
</dbReference>
<dbReference type="GO" id="GO:0006412">
    <property type="term" value="P:translation"/>
    <property type="evidence" value="ECO:0007669"/>
    <property type="project" value="TreeGrafter"/>
</dbReference>
<dbReference type="Gene3D" id="3.30.300.70">
    <property type="entry name" value="RimP-like superfamily, N-terminal"/>
    <property type="match status" value="1"/>
</dbReference>
<dbReference type="HAMAP" id="MF_01077">
    <property type="entry name" value="RimP"/>
    <property type="match status" value="1"/>
</dbReference>
<dbReference type="InterPro" id="IPR003728">
    <property type="entry name" value="Ribosome_maturation_RimP"/>
</dbReference>
<dbReference type="InterPro" id="IPR036847">
    <property type="entry name" value="RimP_C_sf"/>
</dbReference>
<dbReference type="InterPro" id="IPR028989">
    <property type="entry name" value="RimP_N"/>
</dbReference>
<dbReference type="InterPro" id="IPR035956">
    <property type="entry name" value="RimP_N_sf"/>
</dbReference>
<dbReference type="NCBIfam" id="NF011227">
    <property type="entry name" value="PRK14634.1"/>
    <property type="match status" value="1"/>
</dbReference>
<dbReference type="PANTHER" id="PTHR33867">
    <property type="entry name" value="RIBOSOME MATURATION FACTOR RIMP"/>
    <property type="match status" value="1"/>
</dbReference>
<dbReference type="PANTHER" id="PTHR33867:SF1">
    <property type="entry name" value="RIBOSOME MATURATION FACTOR RIMP"/>
    <property type="match status" value="1"/>
</dbReference>
<dbReference type="Pfam" id="PF02576">
    <property type="entry name" value="RimP_N"/>
    <property type="match status" value="1"/>
</dbReference>
<dbReference type="SUPFAM" id="SSF74942">
    <property type="entry name" value="YhbC-like, C-terminal domain"/>
    <property type="match status" value="1"/>
</dbReference>
<dbReference type="SUPFAM" id="SSF75420">
    <property type="entry name" value="YhbC-like, N-terminal domain"/>
    <property type="match status" value="1"/>
</dbReference>
<proteinExistence type="inferred from homology"/>
<reference key="1">
    <citation type="submission" date="2005-08" db="EMBL/GenBank/DDBJ databases">
        <title>Complete sequence of Synechococcus sp. CC9902.</title>
        <authorList>
            <person name="Copeland A."/>
            <person name="Lucas S."/>
            <person name="Lapidus A."/>
            <person name="Barry K."/>
            <person name="Detter J.C."/>
            <person name="Glavina T."/>
            <person name="Hammon N."/>
            <person name="Israni S."/>
            <person name="Pitluck S."/>
            <person name="Martinez M."/>
            <person name="Schmutz J."/>
            <person name="Larimer F."/>
            <person name="Land M."/>
            <person name="Kyrpides N."/>
            <person name="Ivanova N."/>
            <person name="Richardson P."/>
        </authorList>
    </citation>
    <scope>NUCLEOTIDE SEQUENCE [LARGE SCALE GENOMIC DNA]</scope>
    <source>
        <strain>CC9902</strain>
    </source>
</reference>
<comment type="function">
    <text evidence="1">Required for maturation of 30S ribosomal subunits.</text>
</comment>
<comment type="subcellular location">
    <subcellularLocation>
        <location evidence="1">Cytoplasm</location>
    </subcellularLocation>
</comment>
<comment type="similarity">
    <text evidence="1">Belongs to the RimP family.</text>
</comment>
<comment type="sequence caution" evidence="2">
    <conflict type="erroneous initiation">
        <sequence resource="EMBL-CDS" id="ABB25563"/>
    </conflict>
</comment>
<gene>
    <name evidence="1" type="primary">rimP</name>
    <name type="ordered locus">Syncc9902_0595</name>
</gene>
<accession>Q3AZB4</accession>
<protein>
    <recommendedName>
        <fullName evidence="1">Ribosome maturation factor RimP</fullName>
    </recommendedName>
</protein>